<protein>
    <recommendedName>
        <fullName>Homeobox protein HMX3</fullName>
    </recommendedName>
    <alternativeName>
        <fullName>Homeobox protein H6 family member 3</fullName>
    </alternativeName>
    <alternativeName>
        <fullName>Homeobox protein Nkx-5.1</fullName>
        <shortName>cNkx5-1</shortName>
    </alternativeName>
</protein>
<comment type="function">
    <text evidence="1">Transcription factor involved in specification of neuronal cell types and which is required for inner ear and hypothalamus development. Binds to the 5'-CAAGTG-3' core sequence (By similarity).</text>
</comment>
<comment type="subcellular location">
    <subcellularLocation>
        <location evidence="2">Nucleus</location>
    </subcellularLocation>
</comment>
<comment type="developmental stage">
    <text evidence="5">Expressed in the otic placode beginning at stage 10 and exhibits a dynamic expression pattern during formation and further differentiation of the otic vesicle.</text>
</comment>
<comment type="induction">
    <text evidence="4">Regulated by DAN in inner ear.</text>
</comment>
<comment type="similarity">
    <text evidence="6">Belongs to the HMX homeobox family.</text>
</comment>
<evidence type="ECO:0000250" key="1"/>
<evidence type="ECO:0000255" key="2">
    <source>
        <dbReference type="PROSITE-ProRule" id="PRU00108"/>
    </source>
</evidence>
<evidence type="ECO:0000256" key="3">
    <source>
        <dbReference type="SAM" id="MobiDB-lite"/>
    </source>
</evidence>
<evidence type="ECO:0000269" key="4">
    <source>
    </source>
</evidence>
<evidence type="ECO:0000269" key="5">
    <source>
    </source>
</evidence>
<evidence type="ECO:0000305" key="6"/>
<dbReference type="EMBL" id="Y15989">
    <property type="protein sequence ID" value="CAA75921.1"/>
    <property type="molecule type" value="Genomic_DNA"/>
</dbReference>
<dbReference type="RefSeq" id="NP_001007986.1">
    <property type="nucleotide sequence ID" value="NM_001007985.1"/>
</dbReference>
<dbReference type="SMR" id="O57601"/>
<dbReference type="FunCoup" id="O57601">
    <property type="interactions" value="210"/>
</dbReference>
<dbReference type="STRING" id="9031.ENSGALP00000011796"/>
<dbReference type="PaxDb" id="9031-ENSGALP00000011796"/>
<dbReference type="GeneID" id="429199"/>
<dbReference type="KEGG" id="gga:429199"/>
<dbReference type="CTD" id="340784"/>
<dbReference type="VEuPathDB" id="HostDB:geneid_429199"/>
<dbReference type="eggNOG" id="KOG0485">
    <property type="taxonomic scope" value="Eukaryota"/>
</dbReference>
<dbReference type="InParanoid" id="O57601"/>
<dbReference type="OrthoDB" id="6159439at2759"/>
<dbReference type="PhylomeDB" id="O57601"/>
<dbReference type="PRO" id="PR:O57601"/>
<dbReference type="Proteomes" id="UP000000539">
    <property type="component" value="Unassembled WGS sequence"/>
</dbReference>
<dbReference type="GO" id="GO:0005634">
    <property type="term" value="C:nucleus"/>
    <property type="evidence" value="ECO:0000318"/>
    <property type="project" value="GO_Central"/>
</dbReference>
<dbReference type="GO" id="GO:0000981">
    <property type="term" value="F:DNA-binding transcription factor activity, RNA polymerase II-specific"/>
    <property type="evidence" value="ECO:0000318"/>
    <property type="project" value="GO_Central"/>
</dbReference>
<dbReference type="GO" id="GO:0000977">
    <property type="term" value="F:RNA polymerase II transcription regulatory region sequence-specific DNA binding"/>
    <property type="evidence" value="ECO:0000318"/>
    <property type="project" value="GO_Central"/>
</dbReference>
<dbReference type="GO" id="GO:0030154">
    <property type="term" value="P:cell differentiation"/>
    <property type="evidence" value="ECO:0007669"/>
    <property type="project" value="UniProtKB-KW"/>
</dbReference>
<dbReference type="GO" id="GO:0007399">
    <property type="term" value="P:nervous system development"/>
    <property type="evidence" value="ECO:0007669"/>
    <property type="project" value="UniProtKB-KW"/>
</dbReference>
<dbReference type="GO" id="GO:0006357">
    <property type="term" value="P:regulation of transcription by RNA polymerase II"/>
    <property type="evidence" value="ECO:0000318"/>
    <property type="project" value="GO_Central"/>
</dbReference>
<dbReference type="CDD" id="cd00086">
    <property type="entry name" value="homeodomain"/>
    <property type="match status" value="1"/>
</dbReference>
<dbReference type="FunFam" id="1.10.10.60:FF:000053">
    <property type="entry name" value="H6 family homeobox 2"/>
    <property type="match status" value="1"/>
</dbReference>
<dbReference type="Gene3D" id="1.10.10.60">
    <property type="entry name" value="Homeodomain-like"/>
    <property type="match status" value="1"/>
</dbReference>
<dbReference type="InterPro" id="IPR001356">
    <property type="entry name" value="HD"/>
</dbReference>
<dbReference type="InterPro" id="IPR020479">
    <property type="entry name" value="HD_metazoa"/>
</dbReference>
<dbReference type="InterPro" id="IPR051300">
    <property type="entry name" value="HMX_Homeobox_TF"/>
</dbReference>
<dbReference type="InterPro" id="IPR017970">
    <property type="entry name" value="Homeobox_CS"/>
</dbReference>
<dbReference type="InterPro" id="IPR009057">
    <property type="entry name" value="Homeodomain-like_sf"/>
</dbReference>
<dbReference type="PANTHER" id="PTHR46110">
    <property type="entry name" value="HOMEOBOX PROTEIN HMX"/>
    <property type="match status" value="1"/>
</dbReference>
<dbReference type="PANTHER" id="PTHR46110:SF2">
    <property type="entry name" value="HOMEOBOX PROTEIN HMX3"/>
    <property type="match status" value="1"/>
</dbReference>
<dbReference type="Pfam" id="PF00046">
    <property type="entry name" value="Homeodomain"/>
    <property type="match status" value="1"/>
</dbReference>
<dbReference type="PRINTS" id="PR00024">
    <property type="entry name" value="HOMEOBOX"/>
</dbReference>
<dbReference type="SMART" id="SM00389">
    <property type="entry name" value="HOX"/>
    <property type="match status" value="1"/>
</dbReference>
<dbReference type="SUPFAM" id="SSF46689">
    <property type="entry name" value="Homeodomain-like"/>
    <property type="match status" value="1"/>
</dbReference>
<dbReference type="PROSITE" id="PS00027">
    <property type="entry name" value="HOMEOBOX_1"/>
    <property type="match status" value="1"/>
</dbReference>
<dbReference type="PROSITE" id="PS50071">
    <property type="entry name" value="HOMEOBOX_2"/>
    <property type="match status" value="1"/>
</dbReference>
<proteinExistence type="evidence at transcript level"/>
<reference key="1">
    <citation type="journal article" date="1998" name="Development">
        <title>Two regulatory genes, cNkx5-1 and cPax2, show different responses to local signals during otic placode and vesicle formation in the chick embryo.</title>
        <authorList>
            <person name="Herbrand H."/>
            <person name="Guthrie S."/>
            <person name="Hadrys T."/>
            <person name="Hoffmann S."/>
            <person name="Arnold H.H."/>
            <person name="Rinkwitz-Brandt S."/>
            <person name="Bober E."/>
        </authorList>
    </citation>
    <scope>NUCLEOTIDE SEQUENCE [MRNA]</scope>
    <scope>DEVELOPMENTAL STAGE</scope>
    <source>
        <tissue>Brain</tissue>
    </source>
</reference>
<reference key="2">
    <citation type="journal article" date="1997" name="Mamm. Genome">
        <title>Gene homologs on human chromosome 15q21-q26 and a chicken microchromosome identify a new conserved segment.</title>
        <authorList>
            <person name="Jones C.T."/>
            <person name="Morrice D.R."/>
            <person name="Paton I.R."/>
            <person name="Burt D.W."/>
        </authorList>
    </citation>
    <scope>IDENTIFICATION</scope>
</reference>
<reference key="3">
    <citation type="journal article" date="2007" name="Dev. Growth Differ.">
        <title>Dan is required for normal morphogenesis and patterning in the developing chick inner ear.</title>
        <authorList>
            <person name="Yamanishi T."/>
            <person name="Katsu K."/>
            <person name="Funahashi J."/>
            <person name="Yumoto E."/>
            <person name="Yokouchi Y."/>
        </authorList>
    </citation>
    <scope>INDUCTION</scope>
</reference>
<sequence length="308" mass="33787">MPETGQEPPSAPPPPPPPKESFYIKNLLNGDPPKAAPKQPRALFAPSGKADGSGFALSQVGDLSFPRFEIPAPRFALSAHCLERAQTWWYPYALTPAGAHLPRTEAAEKSLLRDSSPASGTDRDSPEPLLQGGDAEQKERDPKSPAEIVLEESDSEEGKKEGGAEDWKKREESPEKKPCRKKKTRTVFSRSQVFQLESTFDMKRYLSSSERAGLAASLHLTETQVKIWFQNRRNKWKRQLAAELEAANLSHAAAQRIVRVPILYHENSGAESSAAGGGGPGPQPLLTFPHPVYYSHPSVTSVPLLRPV</sequence>
<accession>O57601</accession>
<gene>
    <name type="primary">HMX3</name>
    <name type="synonym">NKX-5.1</name>
    <name type="synonym">NKX5-1</name>
</gene>
<feature type="chain" id="PRO_0000341383" description="Homeobox protein HMX3">
    <location>
        <begin position="1"/>
        <end position="308"/>
    </location>
</feature>
<feature type="DNA-binding region" description="Homeobox" evidence="2">
    <location>
        <begin position="181"/>
        <end position="240"/>
    </location>
</feature>
<feature type="region of interest" description="Disordered" evidence="3">
    <location>
        <begin position="1"/>
        <end position="57"/>
    </location>
</feature>
<feature type="region of interest" description="Disordered" evidence="3">
    <location>
        <begin position="107"/>
        <end position="184"/>
    </location>
</feature>
<feature type="compositionally biased region" description="Pro residues" evidence="3">
    <location>
        <begin position="9"/>
        <end position="19"/>
    </location>
</feature>
<feature type="compositionally biased region" description="Basic and acidic residues" evidence="3">
    <location>
        <begin position="135"/>
        <end position="144"/>
    </location>
</feature>
<feature type="compositionally biased region" description="Basic and acidic residues" evidence="3">
    <location>
        <begin position="156"/>
        <end position="177"/>
    </location>
</feature>
<organism>
    <name type="scientific">Gallus gallus</name>
    <name type="common">Chicken</name>
    <dbReference type="NCBI Taxonomy" id="9031"/>
    <lineage>
        <taxon>Eukaryota</taxon>
        <taxon>Metazoa</taxon>
        <taxon>Chordata</taxon>
        <taxon>Craniata</taxon>
        <taxon>Vertebrata</taxon>
        <taxon>Euteleostomi</taxon>
        <taxon>Archelosauria</taxon>
        <taxon>Archosauria</taxon>
        <taxon>Dinosauria</taxon>
        <taxon>Saurischia</taxon>
        <taxon>Theropoda</taxon>
        <taxon>Coelurosauria</taxon>
        <taxon>Aves</taxon>
        <taxon>Neognathae</taxon>
        <taxon>Galloanserae</taxon>
        <taxon>Galliformes</taxon>
        <taxon>Phasianidae</taxon>
        <taxon>Phasianinae</taxon>
        <taxon>Gallus</taxon>
    </lineage>
</organism>
<keyword id="KW-0217">Developmental protein</keyword>
<keyword id="KW-0221">Differentiation</keyword>
<keyword id="KW-0238">DNA-binding</keyword>
<keyword id="KW-0371">Homeobox</keyword>
<keyword id="KW-0524">Neurogenesis</keyword>
<keyword id="KW-0539">Nucleus</keyword>
<keyword id="KW-1185">Reference proteome</keyword>
<keyword id="KW-0804">Transcription</keyword>
<keyword id="KW-0805">Transcription regulation</keyword>
<name>HMX3_CHICK</name>